<reference key="1">
    <citation type="submission" date="2006-01" db="EMBL/GenBank/DDBJ databases">
        <title>A survey of Daboia russelii venom gland transcripts (cDNA): unraveling the venom proteins and peptides.</title>
        <authorList>
            <person name="Madhukumar A.V."/>
            <person name="Reza M.A."/>
            <person name="Gowda T.V."/>
            <person name="Kini R.M."/>
        </authorList>
    </citation>
    <scope>NUCLEOTIDE SEQUENCE [MRNA]</scope>
    <source>
        <tissue>Venom gland</tissue>
    </source>
</reference>
<feature type="signal peptide" evidence="1">
    <location>
        <begin position="1"/>
        <end position="24"/>
    </location>
</feature>
<feature type="chain" id="PRO_0000376878" description="Kunitz-type serine protease inhibitor 1">
    <location>
        <begin position="25"/>
        <end position="84"/>
    </location>
</feature>
<feature type="domain" description="BPTI/Kunitz inhibitor" evidence="2">
    <location>
        <begin position="31"/>
        <end position="81"/>
    </location>
</feature>
<feature type="site" description="Reactive bond for trypsin" evidence="1">
    <location>
        <begin position="41"/>
        <end position="42"/>
    </location>
</feature>
<feature type="disulfide bond" evidence="2">
    <location>
        <begin position="31"/>
        <end position="81"/>
    </location>
</feature>
<feature type="disulfide bond" evidence="2">
    <location>
        <begin position="40"/>
        <end position="64"/>
    </location>
</feature>
<feature type="disulfide bond" evidence="2">
    <location>
        <begin position="56"/>
        <end position="77"/>
    </location>
</feature>
<keyword id="KW-1015">Disulfide bond</keyword>
<keyword id="KW-0646">Protease inhibitor</keyword>
<keyword id="KW-0964">Secreted</keyword>
<keyword id="KW-0722">Serine protease inhibitor</keyword>
<keyword id="KW-0732">Signal</keyword>
<accession>Q2ES50</accession>
<dbReference type="EMBL" id="DQ365978">
    <property type="protein sequence ID" value="ABD24040.1"/>
    <property type="molecule type" value="mRNA"/>
</dbReference>
<dbReference type="SMR" id="Q2ES50"/>
<dbReference type="MEROPS" id="I02.062"/>
<dbReference type="GO" id="GO:0005615">
    <property type="term" value="C:extracellular space"/>
    <property type="evidence" value="ECO:0007669"/>
    <property type="project" value="TreeGrafter"/>
</dbReference>
<dbReference type="GO" id="GO:0004867">
    <property type="term" value="F:serine-type endopeptidase inhibitor activity"/>
    <property type="evidence" value="ECO:0007669"/>
    <property type="project" value="UniProtKB-KW"/>
</dbReference>
<dbReference type="FunFam" id="4.10.410.10:FF:000021">
    <property type="entry name" value="Serine protease inhibitor, putative"/>
    <property type="match status" value="1"/>
</dbReference>
<dbReference type="Gene3D" id="4.10.410.10">
    <property type="entry name" value="Pancreatic trypsin inhibitor Kunitz domain"/>
    <property type="match status" value="1"/>
</dbReference>
<dbReference type="InterPro" id="IPR002223">
    <property type="entry name" value="Kunitz_BPTI"/>
</dbReference>
<dbReference type="InterPro" id="IPR036880">
    <property type="entry name" value="Kunitz_BPTI_sf"/>
</dbReference>
<dbReference type="InterPro" id="IPR020901">
    <property type="entry name" value="Prtase_inh_Kunz-CS"/>
</dbReference>
<dbReference type="InterPro" id="IPR050098">
    <property type="entry name" value="TFPI/VKTCI-like"/>
</dbReference>
<dbReference type="PANTHER" id="PTHR10083:SF374">
    <property type="entry name" value="BPTI_KUNITZ INHIBITOR DOMAIN-CONTAINING PROTEIN"/>
    <property type="match status" value="1"/>
</dbReference>
<dbReference type="PANTHER" id="PTHR10083">
    <property type="entry name" value="KUNITZ-TYPE PROTEASE INHIBITOR-RELATED"/>
    <property type="match status" value="1"/>
</dbReference>
<dbReference type="Pfam" id="PF00014">
    <property type="entry name" value="Kunitz_BPTI"/>
    <property type="match status" value="1"/>
</dbReference>
<dbReference type="PRINTS" id="PR00759">
    <property type="entry name" value="BASICPTASE"/>
</dbReference>
<dbReference type="SMART" id="SM00131">
    <property type="entry name" value="KU"/>
    <property type="match status" value="1"/>
</dbReference>
<dbReference type="SUPFAM" id="SSF57362">
    <property type="entry name" value="BPTI-like"/>
    <property type="match status" value="1"/>
</dbReference>
<dbReference type="PROSITE" id="PS00280">
    <property type="entry name" value="BPTI_KUNITZ_1"/>
    <property type="match status" value="1"/>
</dbReference>
<dbReference type="PROSITE" id="PS50279">
    <property type="entry name" value="BPTI_KUNITZ_2"/>
    <property type="match status" value="1"/>
</dbReference>
<name>VKT1_DABRR</name>
<sequence length="84" mass="9287">MSSGGLLLLLGLLTLWAELTPISGHDRPTFCNLAPESGRCRGHLRRIYYNLESNKCKVFFYGGCGGNANNFETRDECRQTCGGK</sequence>
<organism>
    <name type="scientific">Daboia russelii</name>
    <name type="common">Russel's viper</name>
    <name type="synonym">Vipera russelii</name>
    <dbReference type="NCBI Taxonomy" id="8707"/>
    <lineage>
        <taxon>Eukaryota</taxon>
        <taxon>Metazoa</taxon>
        <taxon>Chordata</taxon>
        <taxon>Craniata</taxon>
        <taxon>Vertebrata</taxon>
        <taxon>Euteleostomi</taxon>
        <taxon>Lepidosauria</taxon>
        <taxon>Squamata</taxon>
        <taxon>Bifurcata</taxon>
        <taxon>Unidentata</taxon>
        <taxon>Episquamata</taxon>
        <taxon>Toxicofera</taxon>
        <taxon>Serpentes</taxon>
        <taxon>Colubroidea</taxon>
        <taxon>Viperidae</taxon>
        <taxon>Viperinae</taxon>
        <taxon>Daboia</taxon>
    </lineage>
</organism>
<protein>
    <recommendedName>
        <fullName>Kunitz-type serine protease inhibitor 1</fullName>
    </recommendedName>
    <alternativeName>
        <fullName>Kunitz protease inhibitor 1</fullName>
    </alternativeName>
    <alternativeName>
        <fullName>Kunitz protease inhibitor I</fullName>
    </alternativeName>
</protein>
<proteinExistence type="evidence at transcript level"/>
<comment type="function">
    <text evidence="1">Serine protease inhibitor.</text>
</comment>
<comment type="subcellular location">
    <subcellularLocation>
        <location evidence="1">Secreted</location>
    </subcellularLocation>
</comment>
<comment type="tissue specificity">
    <text>Expressed by the venom gland.</text>
</comment>
<comment type="similarity">
    <text evidence="3">Belongs to the venom Kunitz-type family.</text>
</comment>
<evidence type="ECO:0000250" key="1"/>
<evidence type="ECO:0000255" key="2">
    <source>
        <dbReference type="PROSITE-ProRule" id="PRU00031"/>
    </source>
</evidence>
<evidence type="ECO:0000305" key="3"/>